<protein>
    <recommendedName>
        <fullName evidence="1">Na(+)/H(+) antiporter NhaB</fullName>
    </recommendedName>
    <alternativeName>
        <fullName evidence="1">Sodium/proton antiporter NhaB</fullName>
    </alternativeName>
</protein>
<name>NHAB_MARN8</name>
<feature type="chain" id="PRO_0000333100" description="Na(+)/H(+) antiporter NhaB">
    <location>
        <begin position="1"/>
        <end position="501"/>
    </location>
</feature>
<feature type="transmembrane region" description="Helical" evidence="1">
    <location>
        <begin position="24"/>
        <end position="44"/>
    </location>
</feature>
<feature type="transmembrane region" description="Helical" evidence="1">
    <location>
        <begin position="46"/>
        <end position="66"/>
    </location>
</feature>
<feature type="transmembrane region" description="Helical" evidence="1">
    <location>
        <begin position="90"/>
        <end position="110"/>
    </location>
</feature>
<feature type="transmembrane region" description="Helical" evidence="1">
    <location>
        <begin position="145"/>
        <end position="165"/>
    </location>
</feature>
<feature type="transmembrane region" description="Helical" evidence="1">
    <location>
        <begin position="206"/>
        <end position="226"/>
    </location>
</feature>
<feature type="transmembrane region" description="Helical" evidence="1">
    <location>
        <begin position="239"/>
        <end position="259"/>
    </location>
</feature>
<feature type="transmembrane region" description="Helical" evidence="1">
    <location>
        <begin position="302"/>
        <end position="319"/>
    </location>
</feature>
<feature type="transmembrane region" description="Helical" evidence="1">
    <location>
        <begin position="351"/>
        <end position="371"/>
    </location>
</feature>
<feature type="transmembrane region" description="Helical" evidence="1">
    <location>
        <begin position="395"/>
        <end position="415"/>
    </location>
</feature>
<feature type="transmembrane region" description="Helical" evidence="1">
    <location>
        <begin position="450"/>
        <end position="470"/>
    </location>
</feature>
<feature type="transmembrane region" description="Helical" evidence="1">
    <location>
        <begin position="478"/>
        <end position="498"/>
    </location>
</feature>
<dbReference type="EMBL" id="CP000514">
    <property type="protein sequence ID" value="ABM20939.1"/>
    <property type="status" value="ALT_INIT"/>
    <property type="molecule type" value="Genomic_DNA"/>
</dbReference>
<dbReference type="RefSeq" id="WP_041656555.1">
    <property type="nucleotide sequence ID" value="NC_008740.1"/>
</dbReference>
<dbReference type="SMR" id="A1U7H0"/>
<dbReference type="STRING" id="351348.Maqu_3871"/>
<dbReference type="KEGG" id="maq:Maqu_3871"/>
<dbReference type="eggNOG" id="COG3067">
    <property type="taxonomic scope" value="Bacteria"/>
</dbReference>
<dbReference type="HOGENOM" id="CLU_041110_0_0_6"/>
<dbReference type="OrthoDB" id="5288732at2"/>
<dbReference type="Proteomes" id="UP000000998">
    <property type="component" value="Chromosome"/>
</dbReference>
<dbReference type="GO" id="GO:0005886">
    <property type="term" value="C:plasma membrane"/>
    <property type="evidence" value="ECO:0007669"/>
    <property type="project" value="UniProtKB-SubCell"/>
</dbReference>
<dbReference type="GO" id="GO:0015385">
    <property type="term" value="F:sodium:proton antiporter activity"/>
    <property type="evidence" value="ECO:0007669"/>
    <property type="project" value="InterPro"/>
</dbReference>
<dbReference type="HAMAP" id="MF_01599">
    <property type="entry name" value="NhaB"/>
    <property type="match status" value="1"/>
</dbReference>
<dbReference type="InterPro" id="IPR004671">
    <property type="entry name" value="Na+/H+_antiporter_NhaB"/>
</dbReference>
<dbReference type="NCBIfam" id="NF007093">
    <property type="entry name" value="PRK09547.1"/>
    <property type="match status" value="1"/>
</dbReference>
<dbReference type="PANTHER" id="PTHR43302:SF1">
    <property type="entry name" value="NA(+)_H(+) ANTIPORTER NHAB"/>
    <property type="match status" value="1"/>
</dbReference>
<dbReference type="PANTHER" id="PTHR43302">
    <property type="entry name" value="TRANSPORTER ARSB-RELATED"/>
    <property type="match status" value="1"/>
</dbReference>
<dbReference type="Pfam" id="PF06450">
    <property type="entry name" value="NhaB"/>
    <property type="match status" value="1"/>
</dbReference>
<comment type="function">
    <text evidence="1">Na(+)/H(+) antiporter that extrudes sodium in exchange for external protons.</text>
</comment>
<comment type="catalytic activity">
    <reaction evidence="1">
        <text>2 Na(+)(in) + 3 H(+)(out) = 2 Na(+)(out) + 3 H(+)(in)</text>
        <dbReference type="Rhea" id="RHEA:29247"/>
        <dbReference type="ChEBI" id="CHEBI:15378"/>
        <dbReference type="ChEBI" id="CHEBI:29101"/>
    </reaction>
    <physiologicalReaction direction="left-to-right" evidence="1">
        <dbReference type="Rhea" id="RHEA:29248"/>
    </physiologicalReaction>
</comment>
<comment type="subcellular location">
    <subcellularLocation>
        <location evidence="1">Cell inner membrane</location>
        <topology evidence="1">Multi-pass membrane protein</topology>
    </subcellularLocation>
</comment>
<comment type="similarity">
    <text evidence="1">Belongs to the NhaB Na(+)/H(+) (TC 2.A.34) antiporter family.</text>
</comment>
<comment type="sequence caution" evidence="2">
    <conflict type="erroneous initiation">
        <sequence resource="EMBL-CDS" id="ABM20939"/>
    </conflict>
</comment>
<gene>
    <name evidence="1" type="primary">nhaB</name>
    <name type="ordered locus">Maqu_3871</name>
</gene>
<accession>A1U7H0</accession>
<reference key="1">
    <citation type="journal article" date="2011" name="Appl. Environ. Microbiol.">
        <title>Genomic potential of Marinobacter aquaeolei, a biogeochemical 'opportunitroph'.</title>
        <authorList>
            <person name="Singer E."/>
            <person name="Webb E.A."/>
            <person name="Nelson W.C."/>
            <person name="Heidelberg J.F."/>
            <person name="Ivanova N."/>
            <person name="Pati A."/>
            <person name="Edwards K.J."/>
        </authorList>
    </citation>
    <scope>NUCLEOTIDE SEQUENCE [LARGE SCALE GENOMIC DNA]</scope>
    <source>
        <strain>ATCC 700491 / DSM 11845 / VT8</strain>
    </source>
</reference>
<organism>
    <name type="scientific">Marinobacter nauticus (strain ATCC 700491 / DSM 11845 / VT8)</name>
    <name type="common">Marinobacter aquaeolei</name>
    <dbReference type="NCBI Taxonomy" id="351348"/>
    <lineage>
        <taxon>Bacteria</taxon>
        <taxon>Pseudomonadati</taxon>
        <taxon>Pseudomonadota</taxon>
        <taxon>Gammaproteobacteria</taxon>
        <taxon>Pseudomonadales</taxon>
        <taxon>Marinobacteraceae</taxon>
        <taxon>Marinobacter</taxon>
    </lineage>
</organism>
<proteinExistence type="inferred from homology"/>
<evidence type="ECO:0000255" key="1">
    <source>
        <dbReference type="HAMAP-Rule" id="MF_01599"/>
    </source>
</evidence>
<evidence type="ECO:0000305" key="2"/>
<keyword id="KW-0050">Antiport</keyword>
<keyword id="KW-0997">Cell inner membrane</keyword>
<keyword id="KW-1003">Cell membrane</keyword>
<keyword id="KW-0406">Ion transport</keyword>
<keyword id="KW-0472">Membrane</keyword>
<keyword id="KW-0915">Sodium</keyword>
<keyword id="KW-0739">Sodium transport</keyword>
<keyword id="KW-0812">Transmembrane</keyword>
<keyword id="KW-1133">Transmembrane helix</keyword>
<keyword id="KW-0813">Transport</keyword>
<sequence length="501" mass="54405">MPTTVISGFTHNFLGKAPVWYKQVILLFLVINPIVMYLLGPGVAGWLLIGEFIFTLAMALKCYPLLPGGLLAVEALLIGLTSADAVYHEVLTNFPVILLLMFMVAGIYFMKELLLVTFTQILVGVRSKSALSLLFCSAAAVLSAFLDALTVTAVIISVAVGFFSVYHKVASGKGYQQKDHNTNSDDEVIELHREDLENFRAFLRSLLMHGAIGTALGGVATMVGEPQNLLIAKVVGWDFAGFFLHMAPVSIPVLFAGLATCWALEKLRWFGYGGRLPKPVRRVLEEFADNEKARRTKSDQAALWIQAVAAVILVFGLAFHIAEVGLIGLLVIILITSFTGVTDEHQIGKAFQESLPFTSLLVVFFAVVAVIHEQHLFKPIIDYVLALPEGQQPGMFFIANGLLSMISDNVFVATVYISEVKQALDAGSISYEHFQTLAVAINTGTNLPSVATPNGQAAFLFLLTSAIAPLVRLSYGRMVIMALPYTIVMGGVGLYMVTHAF</sequence>